<accession>Q58175</accession>
<protein>
    <recommendedName>
        <fullName evidence="1">Hydroxylamine reductase</fullName>
        <ecNumber evidence="1">1.7.99.1</ecNumber>
    </recommendedName>
    <alternativeName>
        <fullName evidence="1">Hybrid-cluster protein</fullName>
        <shortName evidence="1">HCP</shortName>
    </alternativeName>
    <alternativeName>
        <fullName evidence="1">Prismane protein</fullName>
    </alternativeName>
</protein>
<gene>
    <name evidence="1" type="primary">hcp</name>
    <name type="ordered locus">MJ0765</name>
</gene>
<dbReference type="EC" id="1.7.99.1" evidence="1"/>
<dbReference type="EMBL" id="L77117">
    <property type="protein sequence ID" value="AAB98761.1"/>
    <property type="status" value="ALT_INIT"/>
    <property type="molecule type" value="Genomic_DNA"/>
</dbReference>
<dbReference type="PIR" id="E64395">
    <property type="entry name" value="E64395"/>
</dbReference>
<dbReference type="RefSeq" id="WP_010870270.1">
    <property type="nucleotide sequence ID" value="NC_000909.1"/>
</dbReference>
<dbReference type="SMR" id="Q58175"/>
<dbReference type="FunCoup" id="Q58175">
    <property type="interactions" value="1"/>
</dbReference>
<dbReference type="STRING" id="243232.MJ_0765"/>
<dbReference type="PaxDb" id="243232-MJ_0765"/>
<dbReference type="EnsemblBacteria" id="AAB98761">
    <property type="protein sequence ID" value="AAB98761"/>
    <property type="gene ID" value="MJ_0765"/>
</dbReference>
<dbReference type="GeneID" id="1451642"/>
<dbReference type="KEGG" id="mja:MJ_0765"/>
<dbReference type="eggNOG" id="arCOG02430">
    <property type="taxonomic scope" value="Archaea"/>
</dbReference>
<dbReference type="HOGENOM" id="CLU_038344_2_0_2"/>
<dbReference type="InParanoid" id="Q58175"/>
<dbReference type="OrthoDB" id="21311at2157"/>
<dbReference type="PhylomeDB" id="Q58175"/>
<dbReference type="Proteomes" id="UP000000805">
    <property type="component" value="Chromosome"/>
</dbReference>
<dbReference type="GO" id="GO:0005737">
    <property type="term" value="C:cytoplasm"/>
    <property type="evidence" value="ECO:0007669"/>
    <property type="project" value="UniProtKB-SubCell"/>
</dbReference>
<dbReference type="GO" id="GO:0051539">
    <property type="term" value="F:4 iron, 4 sulfur cluster binding"/>
    <property type="evidence" value="ECO:0007669"/>
    <property type="project" value="UniProtKB-KW"/>
</dbReference>
<dbReference type="GO" id="GO:0050418">
    <property type="term" value="F:hydroxylamine reductase activity"/>
    <property type="evidence" value="ECO:0000318"/>
    <property type="project" value="GO_Central"/>
</dbReference>
<dbReference type="GO" id="GO:0046872">
    <property type="term" value="F:metal ion binding"/>
    <property type="evidence" value="ECO:0007669"/>
    <property type="project" value="UniProtKB-KW"/>
</dbReference>
<dbReference type="GO" id="GO:0004601">
    <property type="term" value="F:peroxidase activity"/>
    <property type="evidence" value="ECO:0000318"/>
    <property type="project" value="GO_Central"/>
</dbReference>
<dbReference type="GO" id="GO:0046210">
    <property type="term" value="P:nitric oxide catabolic process"/>
    <property type="evidence" value="ECO:0000318"/>
    <property type="project" value="GO_Central"/>
</dbReference>
<dbReference type="GO" id="GO:0042542">
    <property type="term" value="P:response to hydrogen peroxide"/>
    <property type="evidence" value="ECO:0000318"/>
    <property type="project" value="GO_Central"/>
</dbReference>
<dbReference type="CDD" id="cd01914">
    <property type="entry name" value="HCP"/>
    <property type="match status" value="1"/>
</dbReference>
<dbReference type="FunFam" id="1.20.1270.20:FF:000001">
    <property type="entry name" value="Hydroxylamine reductase"/>
    <property type="match status" value="1"/>
</dbReference>
<dbReference type="FunFam" id="3.40.50.2030:FF:000001">
    <property type="entry name" value="Hydroxylamine reductase"/>
    <property type="match status" value="1"/>
</dbReference>
<dbReference type="FunFam" id="3.40.50.2030:FF:000002">
    <property type="entry name" value="Hydroxylamine reductase"/>
    <property type="match status" value="1"/>
</dbReference>
<dbReference type="Gene3D" id="1.20.1270.20">
    <property type="match status" value="2"/>
</dbReference>
<dbReference type="Gene3D" id="3.40.50.2030">
    <property type="match status" value="2"/>
</dbReference>
<dbReference type="HAMAP" id="MF_00069">
    <property type="entry name" value="Hydroxylam_reduct"/>
    <property type="match status" value="1"/>
</dbReference>
<dbReference type="InterPro" id="IPR004137">
    <property type="entry name" value="HCP/CODH"/>
</dbReference>
<dbReference type="InterPro" id="IPR010048">
    <property type="entry name" value="Hydroxylam_reduct"/>
</dbReference>
<dbReference type="InterPro" id="IPR016099">
    <property type="entry name" value="Prismane-like_a/b-sand"/>
</dbReference>
<dbReference type="InterPro" id="IPR011254">
    <property type="entry name" value="Prismane-like_sf"/>
</dbReference>
<dbReference type="InterPro" id="IPR016100">
    <property type="entry name" value="Prismane_a-bundle"/>
</dbReference>
<dbReference type="NCBIfam" id="TIGR01703">
    <property type="entry name" value="hybrid_clust"/>
    <property type="match status" value="1"/>
</dbReference>
<dbReference type="NCBIfam" id="NF003658">
    <property type="entry name" value="PRK05290.1"/>
    <property type="match status" value="1"/>
</dbReference>
<dbReference type="PANTHER" id="PTHR30109">
    <property type="entry name" value="HYDROXYLAMINE REDUCTASE"/>
    <property type="match status" value="1"/>
</dbReference>
<dbReference type="PANTHER" id="PTHR30109:SF0">
    <property type="entry name" value="HYDROXYLAMINE REDUCTASE"/>
    <property type="match status" value="1"/>
</dbReference>
<dbReference type="Pfam" id="PF03063">
    <property type="entry name" value="Prismane"/>
    <property type="match status" value="1"/>
</dbReference>
<dbReference type="PIRSF" id="PIRSF000076">
    <property type="entry name" value="HCP"/>
    <property type="match status" value="1"/>
</dbReference>
<dbReference type="SUPFAM" id="SSF56821">
    <property type="entry name" value="Prismane protein-like"/>
    <property type="match status" value="1"/>
</dbReference>
<reference key="1">
    <citation type="journal article" date="1996" name="Science">
        <title>Complete genome sequence of the methanogenic archaeon, Methanococcus jannaschii.</title>
        <authorList>
            <person name="Bult C.J."/>
            <person name="White O."/>
            <person name="Olsen G.J."/>
            <person name="Zhou L."/>
            <person name="Fleischmann R.D."/>
            <person name="Sutton G.G."/>
            <person name="Blake J.A."/>
            <person name="FitzGerald L.M."/>
            <person name="Clayton R.A."/>
            <person name="Gocayne J.D."/>
            <person name="Kerlavage A.R."/>
            <person name="Dougherty B.A."/>
            <person name="Tomb J.-F."/>
            <person name="Adams M.D."/>
            <person name="Reich C.I."/>
            <person name="Overbeek R."/>
            <person name="Kirkness E.F."/>
            <person name="Weinstock K.G."/>
            <person name="Merrick J.M."/>
            <person name="Glodek A."/>
            <person name="Scott J.L."/>
            <person name="Geoghagen N.S.M."/>
            <person name="Weidman J.F."/>
            <person name="Fuhrmann J.L."/>
            <person name="Nguyen D."/>
            <person name="Utterback T.R."/>
            <person name="Kelley J.M."/>
            <person name="Peterson J.D."/>
            <person name="Sadow P.W."/>
            <person name="Hanna M.C."/>
            <person name="Cotton M.D."/>
            <person name="Roberts K.M."/>
            <person name="Hurst M.A."/>
            <person name="Kaine B.P."/>
            <person name="Borodovsky M."/>
            <person name="Klenk H.-P."/>
            <person name="Fraser C.M."/>
            <person name="Smith H.O."/>
            <person name="Woese C.R."/>
            <person name="Venter J.C."/>
        </authorList>
    </citation>
    <scope>NUCLEOTIDE SEQUENCE [LARGE SCALE GENOMIC DNA]</scope>
    <source>
        <strain>ATCC 43067 / DSM 2661 / JAL-1 / JCM 10045 / NBRC 100440</strain>
    </source>
</reference>
<keyword id="KW-0004">4Fe-4S</keyword>
<keyword id="KW-0963">Cytoplasm</keyword>
<keyword id="KW-0408">Iron</keyword>
<keyword id="KW-0411">Iron-sulfur</keyword>
<keyword id="KW-0479">Metal-binding</keyword>
<keyword id="KW-0560">Oxidoreductase</keyword>
<keyword id="KW-1185">Reference proteome</keyword>
<sequence length="539" mass="60458">MFCFQCQEAAKNEGCTIKGVCGKDDVVANLQDLLIYTIKGLCYVCDKGNYLDDEVMDYIPKALFVTITNVNFDDKDVINWIKKGVALREKIIEKNNLNKEELPYCATWAYETDEDLINLANTKEVSVLAEDNEDIRSLKELITYGIKGIGAYLSHAMHLGYNNEDIHKFIIKAFTKIVDSKDADELFNLAMETGKYAVETLALLDKANTETYGHPEITEVNLGVRDRPGILISGHDLKDLEQLLEQSKDAGVDIYTHCEMLPAHYYPFFKKYEHFVGNYGGSWPFQREEFEKFNGPIVMTTNCLVPPKDSYKDRVYVTNEVGYPGLKRIPVKEDGTKDFSEVIEHAKKCKPPTPLENGKIVGGFAHNQVLALADKVIEAVKSGKIRKFVVMAGCDGRHKTREYYTEFAKKLPKDTVILTCGCAKYRFIKLDLGDIDGIPRVLDAGQCNDSYSLVKIALALKDAFGLNDVNELPIAYNISWYEQKAVTVLLALLYLGVKNIVLGPTLPAFLSPNVTKVLVEKFGISTISTVDEDIKRLVG</sequence>
<feature type="chain" id="PRO_0000151691" description="Hydroxylamine reductase">
    <location>
        <begin position="1"/>
        <end position="539"/>
    </location>
</feature>
<feature type="binding site" evidence="1">
    <location>
        <position position="3"/>
    </location>
    <ligand>
        <name>[4Fe-4S] cluster</name>
        <dbReference type="ChEBI" id="CHEBI:49883"/>
    </ligand>
</feature>
<feature type="binding site" evidence="1">
    <location>
        <position position="6"/>
    </location>
    <ligand>
        <name>[4Fe-4S] cluster</name>
        <dbReference type="ChEBI" id="CHEBI:49883"/>
    </ligand>
</feature>
<feature type="binding site" evidence="1">
    <location>
        <position position="15"/>
    </location>
    <ligand>
        <name>[4Fe-4S] cluster</name>
        <dbReference type="ChEBI" id="CHEBI:49883"/>
    </ligand>
</feature>
<feature type="binding site" evidence="1">
    <location>
        <position position="21"/>
    </location>
    <ligand>
        <name>[4Fe-4S] cluster</name>
        <dbReference type="ChEBI" id="CHEBI:49883"/>
    </ligand>
</feature>
<feature type="binding site" evidence="1">
    <location>
        <position position="235"/>
    </location>
    <ligand>
        <name>hybrid [4Fe-2O-2S] cluster</name>
        <dbReference type="ChEBI" id="CHEBI:60519"/>
    </ligand>
</feature>
<feature type="binding site" evidence="1">
    <location>
        <position position="259"/>
    </location>
    <ligand>
        <name>hybrid [4Fe-2O-2S] cluster</name>
        <dbReference type="ChEBI" id="CHEBI:60519"/>
    </ligand>
</feature>
<feature type="binding site" evidence="1">
    <location>
        <position position="303"/>
    </location>
    <ligand>
        <name>hybrid [4Fe-2O-2S] cluster</name>
        <dbReference type="ChEBI" id="CHEBI:60519"/>
    </ligand>
</feature>
<feature type="binding site" description="via persulfide group" evidence="1">
    <location>
        <position position="394"/>
    </location>
    <ligand>
        <name>hybrid [4Fe-2O-2S] cluster</name>
        <dbReference type="ChEBI" id="CHEBI:60519"/>
    </ligand>
</feature>
<feature type="binding site" evidence="1">
    <location>
        <position position="422"/>
    </location>
    <ligand>
        <name>hybrid [4Fe-2O-2S] cluster</name>
        <dbReference type="ChEBI" id="CHEBI:60519"/>
    </ligand>
</feature>
<feature type="binding site" evidence="1">
    <location>
        <position position="447"/>
    </location>
    <ligand>
        <name>hybrid [4Fe-2O-2S] cluster</name>
        <dbReference type="ChEBI" id="CHEBI:60519"/>
    </ligand>
</feature>
<feature type="binding site" evidence="1">
    <location>
        <position position="482"/>
    </location>
    <ligand>
        <name>hybrid [4Fe-2O-2S] cluster</name>
        <dbReference type="ChEBI" id="CHEBI:60519"/>
    </ligand>
</feature>
<feature type="binding site" evidence="1">
    <location>
        <position position="484"/>
    </location>
    <ligand>
        <name>hybrid [4Fe-2O-2S] cluster</name>
        <dbReference type="ChEBI" id="CHEBI:60519"/>
    </ligand>
</feature>
<feature type="modified residue" description="Cysteine persulfide" evidence="1">
    <location>
        <position position="394"/>
    </location>
</feature>
<name>HCP_METJA</name>
<comment type="function">
    <text evidence="1">Catalyzes the reduction of hydroxylamine to form NH(3) and H(2)O.</text>
</comment>
<comment type="catalytic activity">
    <reaction evidence="1">
        <text>A + NH4(+) + H2O = hydroxylamine + AH2 + H(+)</text>
        <dbReference type="Rhea" id="RHEA:22052"/>
        <dbReference type="ChEBI" id="CHEBI:13193"/>
        <dbReference type="ChEBI" id="CHEBI:15377"/>
        <dbReference type="ChEBI" id="CHEBI:15378"/>
        <dbReference type="ChEBI" id="CHEBI:15429"/>
        <dbReference type="ChEBI" id="CHEBI:17499"/>
        <dbReference type="ChEBI" id="CHEBI:28938"/>
        <dbReference type="EC" id="1.7.99.1"/>
    </reaction>
</comment>
<comment type="cofactor">
    <cofactor evidence="1">
        <name>[4Fe-4S] cluster</name>
        <dbReference type="ChEBI" id="CHEBI:49883"/>
    </cofactor>
    <text evidence="1">Binds 1 [4Fe-4S] cluster.</text>
</comment>
<comment type="cofactor">
    <cofactor evidence="1">
        <name>hybrid [4Fe-2O-2S] cluster</name>
        <dbReference type="ChEBI" id="CHEBI:60519"/>
    </cofactor>
    <text evidence="1">Binds 1 hybrid [4Fe-2O-2S] cluster.</text>
</comment>
<comment type="subcellular location">
    <subcellularLocation>
        <location evidence="1">Cytoplasm</location>
    </subcellularLocation>
</comment>
<comment type="similarity">
    <text evidence="1">Belongs to the HCP family.</text>
</comment>
<comment type="sequence caution" evidence="2">
    <conflict type="erroneous initiation">
        <sequence resource="EMBL-CDS" id="AAB98761"/>
    </conflict>
    <text>Extended N-terminus.</text>
</comment>
<proteinExistence type="inferred from homology"/>
<evidence type="ECO:0000255" key="1">
    <source>
        <dbReference type="HAMAP-Rule" id="MF_00069"/>
    </source>
</evidence>
<evidence type="ECO:0000305" key="2"/>
<organism>
    <name type="scientific">Methanocaldococcus jannaschii (strain ATCC 43067 / DSM 2661 / JAL-1 / JCM 10045 / NBRC 100440)</name>
    <name type="common">Methanococcus jannaschii</name>
    <dbReference type="NCBI Taxonomy" id="243232"/>
    <lineage>
        <taxon>Archaea</taxon>
        <taxon>Methanobacteriati</taxon>
        <taxon>Methanobacteriota</taxon>
        <taxon>Methanomada group</taxon>
        <taxon>Methanococci</taxon>
        <taxon>Methanococcales</taxon>
        <taxon>Methanocaldococcaceae</taxon>
        <taxon>Methanocaldococcus</taxon>
    </lineage>
</organism>